<gene>
    <name evidence="1" type="primary">fabH</name>
    <name type="ordered locus">Abu_0295</name>
</gene>
<accession>A8ERJ6</accession>
<keyword id="KW-0012">Acyltransferase</keyword>
<keyword id="KW-0963">Cytoplasm</keyword>
<keyword id="KW-0275">Fatty acid biosynthesis</keyword>
<keyword id="KW-0276">Fatty acid metabolism</keyword>
<keyword id="KW-0444">Lipid biosynthesis</keyword>
<keyword id="KW-0443">Lipid metabolism</keyword>
<keyword id="KW-0511">Multifunctional enzyme</keyword>
<keyword id="KW-1185">Reference proteome</keyword>
<keyword id="KW-0808">Transferase</keyword>
<reference key="1">
    <citation type="journal article" date="2007" name="PLoS ONE">
        <title>The complete genome sequence and analysis of the Epsilonproteobacterium Arcobacter butzleri.</title>
        <authorList>
            <person name="Miller W.G."/>
            <person name="Parker C.T."/>
            <person name="Rubenfield M."/>
            <person name="Mendz G.L."/>
            <person name="Woesten M.M.S.M."/>
            <person name="Ussery D.W."/>
            <person name="Stolz J.F."/>
            <person name="Binnewies T.T."/>
            <person name="Hallin P.F."/>
            <person name="Wang G."/>
            <person name="Malek J.A."/>
            <person name="Rogosin A."/>
            <person name="Stanker L.H."/>
            <person name="Mandrell R.E."/>
        </authorList>
    </citation>
    <scope>NUCLEOTIDE SEQUENCE [LARGE SCALE GENOMIC DNA]</scope>
    <source>
        <strain>RM4018</strain>
    </source>
</reference>
<protein>
    <recommendedName>
        <fullName evidence="1">Beta-ketoacyl-[acyl-carrier-protein] synthase III</fullName>
        <shortName evidence="1">Beta-ketoacyl-ACP synthase III</shortName>
        <shortName evidence="1">KAS III</shortName>
        <ecNumber evidence="1">2.3.1.180</ecNumber>
    </recommendedName>
    <alternativeName>
        <fullName evidence="1">3-oxoacyl-[acyl-carrier-protein] synthase 3</fullName>
    </alternativeName>
    <alternativeName>
        <fullName evidence="1">3-oxoacyl-[acyl-carrier-protein] synthase III</fullName>
    </alternativeName>
</protein>
<evidence type="ECO:0000255" key="1">
    <source>
        <dbReference type="HAMAP-Rule" id="MF_01815"/>
    </source>
</evidence>
<sequence length="333" mass="35902">MIYAAFRSIGAYIPPKIMSNADFEKIIDTSDEWITKRTGIKERRIANEGEASSDLGARAGELAIERAAISKEEIDLVICATVTPDFLCMPSTACLIAAKLGLSNVMAFDVSAACTGFVYALNVAKAFIESGMKKNVLIVGAEKYSAILDYTDRTTCFLFGDGAGAAIISATNDKSESIIDINCSSDGNYEDLIKTPGGGSKNPCSQEVLENKMACIKMKGNETFKLAVKTLTSDVKTMLEKHNLTNEDINHFIPHQANYRIIKAVGEALDLSDEKTVVTVDKYGNTSAASIPMAMNYAFEQGKIKAGDTILFDAFGGGLTWGSALFKFAPIKR</sequence>
<dbReference type="EC" id="2.3.1.180" evidence="1"/>
<dbReference type="EMBL" id="CP000361">
    <property type="protein sequence ID" value="ABV66570.1"/>
    <property type="molecule type" value="Genomic_DNA"/>
</dbReference>
<dbReference type="RefSeq" id="WP_012012140.1">
    <property type="nucleotide sequence ID" value="NC_009850.1"/>
</dbReference>
<dbReference type="SMR" id="A8ERJ6"/>
<dbReference type="STRING" id="367737.Abu_0295"/>
<dbReference type="GeneID" id="24303498"/>
<dbReference type="KEGG" id="abu:Abu_0295"/>
<dbReference type="eggNOG" id="COG0332">
    <property type="taxonomic scope" value="Bacteria"/>
</dbReference>
<dbReference type="HOGENOM" id="CLU_039592_4_1_7"/>
<dbReference type="UniPathway" id="UPA00094"/>
<dbReference type="Proteomes" id="UP000001136">
    <property type="component" value="Chromosome"/>
</dbReference>
<dbReference type="GO" id="GO:0005737">
    <property type="term" value="C:cytoplasm"/>
    <property type="evidence" value="ECO:0007669"/>
    <property type="project" value="UniProtKB-SubCell"/>
</dbReference>
<dbReference type="GO" id="GO:0004315">
    <property type="term" value="F:3-oxoacyl-[acyl-carrier-protein] synthase activity"/>
    <property type="evidence" value="ECO:0007669"/>
    <property type="project" value="InterPro"/>
</dbReference>
<dbReference type="GO" id="GO:0033818">
    <property type="term" value="F:beta-ketoacyl-acyl-carrier-protein synthase III activity"/>
    <property type="evidence" value="ECO:0007669"/>
    <property type="project" value="UniProtKB-UniRule"/>
</dbReference>
<dbReference type="GO" id="GO:0006633">
    <property type="term" value="P:fatty acid biosynthetic process"/>
    <property type="evidence" value="ECO:0007669"/>
    <property type="project" value="UniProtKB-UniRule"/>
</dbReference>
<dbReference type="GO" id="GO:0044550">
    <property type="term" value="P:secondary metabolite biosynthetic process"/>
    <property type="evidence" value="ECO:0007669"/>
    <property type="project" value="TreeGrafter"/>
</dbReference>
<dbReference type="CDD" id="cd00830">
    <property type="entry name" value="KAS_III"/>
    <property type="match status" value="1"/>
</dbReference>
<dbReference type="FunFam" id="3.40.47.10:FF:000004">
    <property type="entry name" value="3-oxoacyl-[acyl-carrier-protein] synthase 3"/>
    <property type="match status" value="1"/>
</dbReference>
<dbReference type="Gene3D" id="3.40.47.10">
    <property type="match status" value="1"/>
</dbReference>
<dbReference type="HAMAP" id="MF_01815">
    <property type="entry name" value="FabH"/>
    <property type="match status" value="1"/>
</dbReference>
<dbReference type="InterPro" id="IPR013747">
    <property type="entry name" value="ACP_syn_III_C"/>
</dbReference>
<dbReference type="InterPro" id="IPR013751">
    <property type="entry name" value="ACP_syn_III_N"/>
</dbReference>
<dbReference type="InterPro" id="IPR004655">
    <property type="entry name" value="FabH"/>
</dbReference>
<dbReference type="InterPro" id="IPR016039">
    <property type="entry name" value="Thiolase-like"/>
</dbReference>
<dbReference type="NCBIfam" id="TIGR00747">
    <property type="entry name" value="fabH"/>
    <property type="match status" value="1"/>
</dbReference>
<dbReference type="NCBIfam" id="NF006829">
    <property type="entry name" value="PRK09352.1"/>
    <property type="match status" value="1"/>
</dbReference>
<dbReference type="PANTHER" id="PTHR34069">
    <property type="entry name" value="3-OXOACYL-[ACYL-CARRIER-PROTEIN] SYNTHASE 3"/>
    <property type="match status" value="1"/>
</dbReference>
<dbReference type="PANTHER" id="PTHR34069:SF2">
    <property type="entry name" value="BETA-KETOACYL-[ACYL-CARRIER-PROTEIN] SYNTHASE III"/>
    <property type="match status" value="1"/>
</dbReference>
<dbReference type="Pfam" id="PF08545">
    <property type="entry name" value="ACP_syn_III"/>
    <property type="match status" value="1"/>
</dbReference>
<dbReference type="Pfam" id="PF08541">
    <property type="entry name" value="ACP_syn_III_C"/>
    <property type="match status" value="1"/>
</dbReference>
<dbReference type="SUPFAM" id="SSF53901">
    <property type="entry name" value="Thiolase-like"/>
    <property type="match status" value="1"/>
</dbReference>
<proteinExistence type="inferred from homology"/>
<name>FABH_ALIB4</name>
<comment type="function">
    <text evidence="1">Catalyzes the condensation reaction of fatty acid synthesis by the addition to an acyl acceptor of two carbons from malonyl-ACP. Catalyzes the first condensation reaction which initiates fatty acid synthesis and may therefore play a role in governing the total rate of fatty acid production. Possesses both acetoacetyl-ACP synthase and acetyl transacylase activities. Its substrate specificity determines the biosynthesis of branched-chain and/or straight-chain of fatty acids.</text>
</comment>
<comment type="catalytic activity">
    <reaction evidence="1">
        <text>malonyl-[ACP] + acetyl-CoA + H(+) = 3-oxobutanoyl-[ACP] + CO2 + CoA</text>
        <dbReference type="Rhea" id="RHEA:12080"/>
        <dbReference type="Rhea" id="RHEA-COMP:9623"/>
        <dbReference type="Rhea" id="RHEA-COMP:9625"/>
        <dbReference type="ChEBI" id="CHEBI:15378"/>
        <dbReference type="ChEBI" id="CHEBI:16526"/>
        <dbReference type="ChEBI" id="CHEBI:57287"/>
        <dbReference type="ChEBI" id="CHEBI:57288"/>
        <dbReference type="ChEBI" id="CHEBI:78449"/>
        <dbReference type="ChEBI" id="CHEBI:78450"/>
        <dbReference type="EC" id="2.3.1.180"/>
    </reaction>
</comment>
<comment type="pathway">
    <text evidence="1">Lipid metabolism; fatty acid biosynthesis.</text>
</comment>
<comment type="subunit">
    <text evidence="1">Homodimer.</text>
</comment>
<comment type="subcellular location">
    <subcellularLocation>
        <location evidence="1">Cytoplasm</location>
    </subcellularLocation>
</comment>
<comment type="domain">
    <text evidence="1">The last Arg residue of the ACP-binding site is essential for the weak association between ACP/AcpP and FabH.</text>
</comment>
<comment type="similarity">
    <text evidence="1">Belongs to the thiolase-like superfamily. FabH family.</text>
</comment>
<feature type="chain" id="PRO_1000070213" description="Beta-ketoacyl-[acyl-carrier-protein] synthase III">
    <location>
        <begin position="1"/>
        <end position="333"/>
    </location>
</feature>
<feature type="region of interest" description="ACP-binding" evidence="1">
    <location>
        <begin position="256"/>
        <end position="260"/>
    </location>
</feature>
<feature type="active site" evidence="1">
    <location>
        <position position="114"/>
    </location>
</feature>
<feature type="active site" evidence="1">
    <location>
        <position position="255"/>
    </location>
</feature>
<feature type="active site" evidence="1">
    <location>
        <position position="285"/>
    </location>
</feature>
<organism>
    <name type="scientific">Aliarcobacter butzleri (strain RM4018)</name>
    <name type="common">Arcobacter butzleri</name>
    <dbReference type="NCBI Taxonomy" id="367737"/>
    <lineage>
        <taxon>Bacteria</taxon>
        <taxon>Pseudomonadati</taxon>
        <taxon>Campylobacterota</taxon>
        <taxon>Epsilonproteobacteria</taxon>
        <taxon>Campylobacterales</taxon>
        <taxon>Arcobacteraceae</taxon>
        <taxon>Aliarcobacter</taxon>
    </lineage>
</organism>